<evidence type="ECO:0000255" key="1">
    <source>
        <dbReference type="HAMAP-Rule" id="MF_00610"/>
    </source>
</evidence>
<comment type="function">
    <text evidence="1">Component of the cytochrome b6-f complex, which mediates electron transfer between photosystem II (PSII) and photosystem I (PSI), cyclic electron flow around PSI, and state transitions.</text>
</comment>
<comment type="cofactor">
    <cofactor evidence="1">
        <name>heme</name>
        <dbReference type="ChEBI" id="CHEBI:30413"/>
    </cofactor>
    <text evidence="1">Binds 1 heme group covalently.</text>
</comment>
<comment type="subunit">
    <text evidence="1">The 4 large subunits of the cytochrome b6-f complex are cytochrome b6, subunit IV (17 kDa polypeptide, PetD), cytochrome f and the Rieske protein, while the 4 small subunits are PetG, PetL, PetM and PetN. The complex functions as a dimer.</text>
</comment>
<comment type="subcellular location">
    <subcellularLocation>
        <location evidence="1">Cellular thylakoid membrane</location>
        <topology evidence="1">Single-pass membrane protein</topology>
    </subcellularLocation>
</comment>
<comment type="similarity">
    <text evidence="1">Belongs to the cytochrome f family.</text>
</comment>
<name>CYF_PROM5</name>
<protein>
    <recommendedName>
        <fullName evidence="1">Cytochrome f</fullName>
    </recommendedName>
</protein>
<gene>
    <name evidence="1" type="primary">petA</name>
    <name type="ordered locus">P9515_05251</name>
</gene>
<dbReference type="EMBL" id="CP000552">
    <property type="protein sequence ID" value="ABM71734.1"/>
    <property type="molecule type" value="Genomic_DNA"/>
</dbReference>
<dbReference type="RefSeq" id="WP_011819842.1">
    <property type="nucleotide sequence ID" value="NC_008817.1"/>
</dbReference>
<dbReference type="SMR" id="A2BVC3"/>
<dbReference type="STRING" id="167542.P9515_05251"/>
<dbReference type="GeneID" id="60201659"/>
<dbReference type="KEGG" id="pmc:P9515_05251"/>
<dbReference type="eggNOG" id="COG3258">
    <property type="taxonomic scope" value="Bacteria"/>
</dbReference>
<dbReference type="HOGENOM" id="CLU_033498_0_0_3"/>
<dbReference type="OrthoDB" id="581091at2"/>
<dbReference type="Proteomes" id="UP000001589">
    <property type="component" value="Chromosome"/>
</dbReference>
<dbReference type="GO" id="GO:0031676">
    <property type="term" value="C:plasma membrane-derived thylakoid membrane"/>
    <property type="evidence" value="ECO:0007669"/>
    <property type="project" value="UniProtKB-SubCell"/>
</dbReference>
<dbReference type="GO" id="GO:0009055">
    <property type="term" value="F:electron transfer activity"/>
    <property type="evidence" value="ECO:0007669"/>
    <property type="project" value="UniProtKB-UniRule"/>
</dbReference>
<dbReference type="GO" id="GO:0020037">
    <property type="term" value="F:heme binding"/>
    <property type="evidence" value="ECO:0007669"/>
    <property type="project" value="InterPro"/>
</dbReference>
<dbReference type="GO" id="GO:0005506">
    <property type="term" value="F:iron ion binding"/>
    <property type="evidence" value="ECO:0007669"/>
    <property type="project" value="InterPro"/>
</dbReference>
<dbReference type="GO" id="GO:0015979">
    <property type="term" value="P:photosynthesis"/>
    <property type="evidence" value="ECO:0007669"/>
    <property type="project" value="UniProtKB-UniRule"/>
</dbReference>
<dbReference type="FunFam" id="2.60.40.830:FF:000001">
    <property type="entry name" value="Cytochrome f"/>
    <property type="match status" value="1"/>
</dbReference>
<dbReference type="Gene3D" id="2.40.50.100">
    <property type="match status" value="1"/>
</dbReference>
<dbReference type="Gene3D" id="2.60.40.830">
    <property type="entry name" value="Cytochrome f large domain"/>
    <property type="match status" value="1"/>
</dbReference>
<dbReference type="Gene3D" id="1.20.5.700">
    <property type="entry name" value="Single helix bin"/>
    <property type="match status" value="1"/>
</dbReference>
<dbReference type="HAMAP" id="MF_00610">
    <property type="entry name" value="Cytb6_f_cytF"/>
    <property type="match status" value="1"/>
</dbReference>
<dbReference type="InterPro" id="IPR024058">
    <property type="entry name" value="Cyt-f_TM"/>
</dbReference>
<dbReference type="InterPro" id="IPR002325">
    <property type="entry name" value="Cyt_f"/>
</dbReference>
<dbReference type="InterPro" id="IPR024094">
    <property type="entry name" value="Cyt_f_lg_dom"/>
</dbReference>
<dbReference type="InterPro" id="IPR036826">
    <property type="entry name" value="Cyt_f_lg_dom_sf"/>
</dbReference>
<dbReference type="InterPro" id="IPR011054">
    <property type="entry name" value="Rudment_hybrid_motif"/>
</dbReference>
<dbReference type="NCBIfam" id="NF002736">
    <property type="entry name" value="PRK02693.1"/>
    <property type="match status" value="1"/>
</dbReference>
<dbReference type="PANTHER" id="PTHR33288">
    <property type="match status" value="1"/>
</dbReference>
<dbReference type="PANTHER" id="PTHR33288:SF10">
    <property type="entry name" value="CYTOCHROME F"/>
    <property type="match status" value="1"/>
</dbReference>
<dbReference type="Pfam" id="PF01333">
    <property type="entry name" value="Apocytochr_F_C"/>
    <property type="match status" value="1"/>
</dbReference>
<dbReference type="Pfam" id="PF16639">
    <property type="entry name" value="Apocytochr_F_N"/>
    <property type="match status" value="1"/>
</dbReference>
<dbReference type="PRINTS" id="PR00610">
    <property type="entry name" value="CYTOCHROMEF"/>
</dbReference>
<dbReference type="SUPFAM" id="SSF103431">
    <property type="entry name" value="Cytochrome f subunit of the cytochrome b6f complex, transmembrane anchor"/>
    <property type="match status" value="1"/>
</dbReference>
<dbReference type="SUPFAM" id="SSF49441">
    <property type="entry name" value="Cytochrome f, large domain"/>
    <property type="match status" value="1"/>
</dbReference>
<dbReference type="SUPFAM" id="SSF51246">
    <property type="entry name" value="Rudiment single hybrid motif"/>
    <property type="match status" value="1"/>
</dbReference>
<dbReference type="PROSITE" id="PS51010">
    <property type="entry name" value="CYTF"/>
    <property type="match status" value="1"/>
</dbReference>
<reference key="1">
    <citation type="journal article" date="2007" name="PLoS Genet.">
        <title>Patterns and implications of gene gain and loss in the evolution of Prochlorococcus.</title>
        <authorList>
            <person name="Kettler G.C."/>
            <person name="Martiny A.C."/>
            <person name="Huang K."/>
            <person name="Zucker J."/>
            <person name="Coleman M.L."/>
            <person name="Rodrigue S."/>
            <person name="Chen F."/>
            <person name="Lapidus A."/>
            <person name="Ferriera S."/>
            <person name="Johnson J."/>
            <person name="Steglich C."/>
            <person name="Church G.M."/>
            <person name="Richardson P."/>
            <person name="Chisholm S.W."/>
        </authorList>
    </citation>
    <scope>NUCLEOTIDE SEQUENCE [LARGE SCALE GENOMIC DNA]</scope>
    <source>
        <strain>MIT 9515</strain>
    </source>
</reference>
<feature type="signal peptide" evidence="1">
    <location>
        <begin position="1"/>
        <end position="34"/>
    </location>
</feature>
<feature type="chain" id="PRO_0000342034" description="Cytochrome f">
    <location>
        <begin position="35"/>
        <end position="317"/>
    </location>
</feature>
<feature type="transmembrane region" description="Helical" evidence="1">
    <location>
        <begin position="284"/>
        <end position="304"/>
    </location>
</feature>
<feature type="binding site" description="axial binding residue" evidence="1">
    <location>
        <position position="35"/>
    </location>
    <ligand>
        <name>heme</name>
        <dbReference type="ChEBI" id="CHEBI:30413"/>
    </ligand>
    <ligandPart>
        <name>Fe</name>
        <dbReference type="ChEBI" id="CHEBI:18248"/>
    </ligandPart>
</feature>
<feature type="binding site" description="covalent" evidence="1">
    <location>
        <position position="55"/>
    </location>
    <ligand>
        <name>heme</name>
        <dbReference type="ChEBI" id="CHEBI:30413"/>
    </ligand>
</feature>
<feature type="binding site" description="covalent" evidence="1">
    <location>
        <position position="58"/>
    </location>
    <ligand>
        <name>heme</name>
        <dbReference type="ChEBI" id="CHEBI:30413"/>
    </ligand>
</feature>
<feature type="binding site" description="axial binding residue" evidence="1">
    <location>
        <position position="59"/>
    </location>
    <ligand>
        <name>heme</name>
        <dbReference type="ChEBI" id="CHEBI:30413"/>
    </ligand>
    <ligandPart>
        <name>Fe</name>
        <dbReference type="ChEBI" id="CHEBI:18248"/>
    </ligandPart>
</feature>
<sequence length="317" mass="34565">MINFKKQIMKKTTFFLCAMLLVSSILIAPRSSLAYPFWAQQNYESPREATGKIVCANCHLAQMPTIAEVPQAVGADSVFKAVVKIPYKDDIKEIGADGSEVPLQVGAVVMLPDGFKLAPQERWTDEIKEETEGVYFTNYSEEKENIIIVGPLPGDTNKEIIFPVLSPNPATNKEYHYGKYSLHIGGNRGRGQVYPTGDKSNNVIFTSSSAGTINSIETIEDGSYQINIENENGEITTEAVPVGPKLIVKEQDQITVGAPLTSDPNVGGFGQLDAEVVLQSPYRIIGLIAFFIGVGLTQILLVLKKKQVEKVQAAEGI</sequence>
<proteinExistence type="inferred from homology"/>
<organism>
    <name type="scientific">Prochlorococcus marinus (strain MIT 9515)</name>
    <dbReference type="NCBI Taxonomy" id="167542"/>
    <lineage>
        <taxon>Bacteria</taxon>
        <taxon>Bacillati</taxon>
        <taxon>Cyanobacteriota</taxon>
        <taxon>Cyanophyceae</taxon>
        <taxon>Synechococcales</taxon>
        <taxon>Prochlorococcaceae</taxon>
        <taxon>Prochlorococcus</taxon>
    </lineage>
</organism>
<accession>A2BVC3</accession>
<keyword id="KW-0249">Electron transport</keyword>
<keyword id="KW-0349">Heme</keyword>
<keyword id="KW-0408">Iron</keyword>
<keyword id="KW-0472">Membrane</keyword>
<keyword id="KW-0479">Metal-binding</keyword>
<keyword id="KW-0602">Photosynthesis</keyword>
<keyword id="KW-0732">Signal</keyword>
<keyword id="KW-0793">Thylakoid</keyword>
<keyword id="KW-0812">Transmembrane</keyword>
<keyword id="KW-1133">Transmembrane helix</keyword>
<keyword id="KW-0813">Transport</keyword>